<gene>
    <name type="primary">RPL32B</name>
    <name type="ordered locus">At5g46430</name>
    <name type="ORF">K11I1.2</name>
</gene>
<organism>
    <name type="scientific">Arabidopsis thaliana</name>
    <name type="common">Mouse-ear cress</name>
    <dbReference type="NCBI Taxonomy" id="3702"/>
    <lineage>
        <taxon>Eukaryota</taxon>
        <taxon>Viridiplantae</taxon>
        <taxon>Streptophyta</taxon>
        <taxon>Embryophyta</taxon>
        <taxon>Tracheophyta</taxon>
        <taxon>Spermatophyta</taxon>
        <taxon>Magnoliopsida</taxon>
        <taxon>eudicotyledons</taxon>
        <taxon>Gunneridae</taxon>
        <taxon>Pentapetalae</taxon>
        <taxon>rosids</taxon>
        <taxon>malvids</taxon>
        <taxon>Brassicales</taxon>
        <taxon>Brassicaceae</taxon>
        <taxon>Camelineae</taxon>
        <taxon>Arabidopsis</taxon>
    </lineage>
</organism>
<feature type="chain" id="PRO_0000244750" description="Large ribosomal subunit protein eL32y">
    <location>
        <begin position="1"/>
        <end position="133"/>
    </location>
</feature>
<proteinExistence type="evidence at transcript level"/>
<evidence type="ECO:0000303" key="1">
    <source>
    </source>
</evidence>
<evidence type="ECO:0000305" key="2"/>
<accession>Q9FHG2</accession>
<protein>
    <recommendedName>
        <fullName evidence="1">Large ribosomal subunit protein eL32y</fullName>
    </recommendedName>
    <alternativeName>
        <fullName>60S ribosomal protein L32-2</fullName>
    </alternativeName>
</protein>
<keyword id="KW-1185">Reference proteome</keyword>
<keyword id="KW-0687">Ribonucleoprotein</keyword>
<keyword id="KW-0689">Ribosomal protein</keyword>
<name>RL322_ARATH</name>
<comment type="similarity">
    <text evidence="2">Belongs to the eukaryotic ribosomal protein eL32 family.</text>
</comment>
<sequence>MAVPLLTKKVVKKRSAKFIRPQSDRRITVKESWRRPKGIDSRVRRKFKGVTLMPNVGYGSDKKTRHYLPNGFKKFIVHNTSELELLMMHNRTYCAEIAHNISTKKRKAIVERASQLDVVVSNKLGRLRSQEDE</sequence>
<reference key="1">
    <citation type="journal article" date="2000" name="DNA Res.">
        <title>Structural analysis of Arabidopsis thaliana chromosome 5. X. Sequence features of the regions of 3,076,755 bp covered by sixty P1 and TAC clones.</title>
        <authorList>
            <person name="Sato S."/>
            <person name="Nakamura Y."/>
            <person name="Kaneko T."/>
            <person name="Katoh T."/>
            <person name="Asamizu E."/>
            <person name="Kotani H."/>
            <person name="Tabata S."/>
        </authorList>
    </citation>
    <scope>NUCLEOTIDE SEQUENCE [LARGE SCALE GENOMIC DNA]</scope>
    <source>
        <strain>cv. Columbia</strain>
    </source>
</reference>
<reference key="2">
    <citation type="journal article" date="2017" name="Plant J.">
        <title>Araport11: a complete reannotation of the Arabidopsis thaliana reference genome.</title>
        <authorList>
            <person name="Cheng C.Y."/>
            <person name="Krishnakumar V."/>
            <person name="Chan A.P."/>
            <person name="Thibaud-Nissen F."/>
            <person name="Schobel S."/>
            <person name="Town C.D."/>
        </authorList>
    </citation>
    <scope>GENOME REANNOTATION</scope>
    <source>
        <strain>cv. Columbia</strain>
    </source>
</reference>
<reference key="3">
    <citation type="journal article" date="2003" name="Science">
        <title>Empirical analysis of transcriptional activity in the Arabidopsis genome.</title>
        <authorList>
            <person name="Yamada K."/>
            <person name="Lim J."/>
            <person name="Dale J.M."/>
            <person name="Chen H."/>
            <person name="Shinn P."/>
            <person name="Palm C.J."/>
            <person name="Southwick A.M."/>
            <person name="Wu H.C."/>
            <person name="Kim C.J."/>
            <person name="Nguyen M."/>
            <person name="Pham P.K."/>
            <person name="Cheuk R.F."/>
            <person name="Karlin-Newmann G."/>
            <person name="Liu S.X."/>
            <person name="Lam B."/>
            <person name="Sakano H."/>
            <person name="Wu T."/>
            <person name="Yu G."/>
            <person name="Miranda M."/>
            <person name="Quach H.L."/>
            <person name="Tripp M."/>
            <person name="Chang C.H."/>
            <person name="Lee J.M."/>
            <person name="Toriumi M.J."/>
            <person name="Chan M.M."/>
            <person name="Tang C.C."/>
            <person name="Onodera C.S."/>
            <person name="Deng J.M."/>
            <person name="Akiyama K."/>
            <person name="Ansari Y."/>
            <person name="Arakawa T."/>
            <person name="Banh J."/>
            <person name="Banno F."/>
            <person name="Bowser L."/>
            <person name="Brooks S.Y."/>
            <person name="Carninci P."/>
            <person name="Chao Q."/>
            <person name="Choy N."/>
            <person name="Enju A."/>
            <person name="Goldsmith A.D."/>
            <person name="Gurjal M."/>
            <person name="Hansen N.F."/>
            <person name="Hayashizaki Y."/>
            <person name="Johnson-Hopson C."/>
            <person name="Hsuan V.W."/>
            <person name="Iida K."/>
            <person name="Karnes M."/>
            <person name="Khan S."/>
            <person name="Koesema E."/>
            <person name="Ishida J."/>
            <person name="Jiang P.X."/>
            <person name="Jones T."/>
            <person name="Kawai J."/>
            <person name="Kamiya A."/>
            <person name="Meyers C."/>
            <person name="Nakajima M."/>
            <person name="Narusaka M."/>
            <person name="Seki M."/>
            <person name="Sakurai T."/>
            <person name="Satou M."/>
            <person name="Tamse R."/>
            <person name="Vaysberg M."/>
            <person name="Wallender E.K."/>
            <person name="Wong C."/>
            <person name="Yamamura Y."/>
            <person name="Yuan S."/>
            <person name="Shinozaki K."/>
            <person name="Davis R.W."/>
            <person name="Theologis A."/>
            <person name="Ecker J.R."/>
        </authorList>
    </citation>
    <scope>NUCLEOTIDE SEQUENCE [LARGE SCALE MRNA]</scope>
    <source>
        <strain>cv. Columbia</strain>
    </source>
</reference>
<reference key="4">
    <citation type="journal article" date="2001" name="Plant Physiol.">
        <title>The organization of cytoplasmic ribosomal protein genes in the Arabidopsis genome.</title>
        <authorList>
            <person name="Barakat A."/>
            <person name="Szick-Miranda K."/>
            <person name="Chang I.-F."/>
            <person name="Guyot R."/>
            <person name="Blanc G."/>
            <person name="Cooke R."/>
            <person name="Delseny M."/>
            <person name="Bailey-Serres J."/>
        </authorList>
    </citation>
    <scope>GENE FAMILY ORGANIZATION</scope>
    <scope>NOMENCLATURE</scope>
</reference>
<reference key="5">
    <citation type="journal article" date="2023" name="Plant Cell">
        <title>An updated nomenclature for plant ribosomal protein genes.</title>
        <authorList>
            <person name="Scarpin M.R."/>
            <person name="Busche M."/>
            <person name="Martinez R.E."/>
            <person name="Harper L.C."/>
            <person name="Reiser L."/>
            <person name="Szakonyi D."/>
            <person name="Merchante C."/>
            <person name="Lan T."/>
            <person name="Xiong W."/>
            <person name="Mo B."/>
            <person name="Tang G."/>
            <person name="Chen X."/>
            <person name="Bailey-Serres J."/>
            <person name="Browning K.S."/>
            <person name="Brunkard J.O."/>
        </authorList>
    </citation>
    <scope>NOMENCLATURE</scope>
</reference>
<dbReference type="EMBL" id="AB019223">
    <property type="protein sequence ID" value="BAB10811.1"/>
    <property type="molecule type" value="Genomic_DNA"/>
</dbReference>
<dbReference type="EMBL" id="CP002688">
    <property type="protein sequence ID" value="AED95384.1"/>
    <property type="molecule type" value="Genomic_DNA"/>
</dbReference>
<dbReference type="EMBL" id="CP002688">
    <property type="protein sequence ID" value="AED95385.1"/>
    <property type="molecule type" value="Genomic_DNA"/>
</dbReference>
<dbReference type="EMBL" id="AF446871">
    <property type="protein sequence ID" value="AAL38604.1"/>
    <property type="molecule type" value="mRNA"/>
</dbReference>
<dbReference type="EMBL" id="AY042872">
    <property type="protein sequence ID" value="AAK68812.1"/>
    <property type="molecule type" value="mRNA"/>
</dbReference>
<dbReference type="EMBL" id="AY052193">
    <property type="protein sequence ID" value="AAK97664.1"/>
    <property type="molecule type" value="mRNA"/>
</dbReference>
<dbReference type="EMBL" id="BT002551">
    <property type="protein sequence ID" value="AAO00911.1"/>
    <property type="molecule type" value="mRNA"/>
</dbReference>
<dbReference type="RefSeq" id="NP_199455.1">
    <property type="nucleotide sequence ID" value="NM_124013.2"/>
</dbReference>
<dbReference type="RefSeq" id="NP_851142.1">
    <property type="nucleotide sequence ID" value="NM_180811.2"/>
</dbReference>
<dbReference type="SMR" id="Q9FHG2"/>
<dbReference type="BioGRID" id="19935">
    <property type="interactions" value="77"/>
</dbReference>
<dbReference type="FunCoup" id="Q9FHG2">
    <property type="interactions" value="3963"/>
</dbReference>
<dbReference type="IntAct" id="Q9FHG2">
    <property type="interactions" value="1"/>
</dbReference>
<dbReference type="STRING" id="3702.Q9FHG2"/>
<dbReference type="iPTMnet" id="Q9FHG2"/>
<dbReference type="PaxDb" id="3702-AT5G46430.2"/>
<dbReference type="ProteomicsDB" id="224798"/>
<dbReference type="EnsemblPlants" id="AT5G46430.1">
    <property type="protein sequence ID" value="AT5G46430.1"/>
    <property type="gene ID" value="AT5G46430"/>
</dbReference>
<dbReference type="EnsemblPlants" id="AT5G46430.2">
    <property type="protein sequence ID" value="AT5G46430.2"/>
    <property type="gene ID" value="AT5G46430"/>
</dbReference>
<dbReference type="GeneID" id="834686"/>
<dbReference type="Gramene" id="AT5G46430.1">
    <property type="protein sequence ID" value="AT5G46430.1"/>
    <property type="gene ID" value="AT5G46430"/>
</dbReference>
<dbReference type="Gramene" id="AT5G46430.2">
    <property type="protein sequence ID" value="AT5G46430.2"/>
    <property type="gene ID" value="AT5G46430"/>
</dbReference>
<dbReference type="KEGG" id="ath:AT5G46430"/>
<dbReference type="Araport" id="AT5G46430"/>
<dbReference type="TAIR" id="AT5G46430"/>
<dbReference type="eggNOG" id="KOG0878">
    <property type="taxonomic scope" value="Eukaryota"/>
</dbReference>
<dbReference type="HOGENOM" id="CLU_071479_4_1_1"/>
<dbReference type="InParanoid" id="Q9FHG2"/>
<dbReference type="OMA" id="GPHNTAK"/>
<dbReference type="OrthoDB" id="1038506at2759"/>
<dbReference type="PhylomeDB" id="Q9FHG2"/>
<dbReference type="CD-CODE" id="4299E36E">
    <property type="entry name" value="Nucleolus"/>
</dbReference>
<dbReference type="PRO" id="PR:Q9FHG2"/>
<dbReference type="Proteomes" id="UP000006548">
    <property type="component" value="Chromosome 5"/>
</dbReference>
<dbReference type="ExpressionAtlas" id="Q9FHG2">
    <property type="expression patterns" value="baseline and differential"/>
</dbReference>
<dbReference type="GO" id="GO:0022625">
    <property type="term" value="C:cytosolic large ribosomal subunit"/>
    <property type="evidence" value="ECO:0007005"/>
    <property type="project" value="TAIR"/>
</dbReference>
<dbReference type="GO" id="GO:0009536">
    <property type="term" value="C:plastid"/>
    <property type="evidence" value="ECO:0007005"/>
    <property type="project" value="TAIR"/>
</dbReference>
<dbReference type="GO" id="GO:0003729">
    <property type="term" value="F:mRNA binding"/>
    <property type="evidence" value="ECO:0000314"/>
    <property type="project" value="TAIR"/>
</dbReference>
<dbReference type="GO" id="GO:0003735">
    <property type="term" value="F:structural constituent of ribosome"/>
    <property type="evidence" value="ECO:0000314"/>
    <property type="project" value="CAFA"/>
</dbReference>
<dbReference type="GO" id="GO:0006412">
    <property type="term" value="P:translation"/>
    <property type="evidence" value="ECO:0007669"/>
    <property type="project" value="InterPro"/>
</dbReference>
<dbReference type="CDD" id="cd00513">
    <property type="entry name" value="Ribosomal_L32_L32e"/>
    <property type="match status" value="1"/>
</dbReference>
<dbReference type="InterPro" id="IPR001515">
    <property type="entry name" value="Ribosomal_eL32"/>
</dbReference>
<dbReference type="InterPro" id="IPR018263">
    <property type="entry name" value="Ribosomal_eL32_CS"/>
</dbReference>
<dbReference type="InterPro" id="IPR036351">
    <property type="entry name" value="Ribosomal_eL32_sf"/>
</dbReference>
<dbReference type="PANTHER" id="PTHR23413">
    <property type="entry name" value="60S RIBOSOMAL PROTEIN L32 AND DNA-DIRECTED RNA POLYMERASE II, SUBUNIT N"/>
    <property type="match status" value="1"/>
</dbReference>
<dbReference type="PANTHER" id="PTHR23413:SF21">
    <property type="entry name" value="LARGE RIBOSOMAL SUBUNIT PROTEIN EL32Y-RELATED"/>
    <property type="match status" value="1"/>
</dbReference>
<dbReference type="Pfam" id="PF01655">
    <property type="entry name" value="Ribosomal_L32e"/>
    <property type="match status" value="1"/>
</dbReference>
<dbReference type="SMART" id="SM01393">
    <property type="entry name" value="Ribosomal_L32e"/>
    <property type="match status" value="1"/>
</dbReference>
<dbReference type="SUPFAM" id="SSF52042">
    <property type="entry name" value="Ribosomal protein L32e"/>
    <property type="match status" value="1"/>
</dbReference>
<dbReference type="PROSITE" id="PS00580">
    <property type="entry name" value="RIBOSOMAL_L32E"/>
    <property type="match status" value="1"/>
</dbReference>